<accession>Q81X26</accession>
<accession>Q6HQW1</accession>
<accession>Q6KK81</accession>
<organism>
    <name type="scientific">Bacillus anthracis</name>
    <dbReference type="NCBI Taxonomy" id="1392"/>
    <lineage>
        <taxon>Bacteria</taxon>
        <taxon>Bacillati</taxon>
        <taxon>Bacillota</taxon>
        <taxon>Bacilli</taxon>
        <taxon>Bacillales</taxon>
        <taxon>Bacillaceae</taxon>
        <taxon>Bacillus</taxon>
        <taxon>Bacillus cereus group</taxon>
    </lineage>
</organism>
<dbReference type="EC" id="7.4.2.8" evidence="1"/>
<dbReference type="EMBL" id="AE016879">
    <property type="protein sequence ID" value="AAP29076.1"/>
    <property type="molecule type" value="Genomic_DNA"/>
</dbReference>
<dbReference type="EMBL" id="AE017334">
    <property type="protein sequence ID" value="AAT34558.1"/>
    <property type="molecule type" value="Genomic_DNA"/>
</dbReference>
<dbReference type="EMBL" id="AE017225">
    <property type="protein sequence ID" value="AAT57327.1"/>
    <property type="molecule type" value="Genomic_DNA"/>
</dbReference>
<dbReference type="RefSeq" id="NP_847590.1">
    <property type="nucleotide sequence ID" value="NC_003997.3"/>
</dbReference>
<dbReference type="RefSeq" id="YP_031277.1">
    <property type="nucleotide sequence ID" value="NC_005945.1"/>
</dbReference>
<dbReference type="SMR" id="Q81X26"/>
<dbReference type="STRING" id="261594.GBAA_5421"/>
<dbReference type="DNASU" id="1085014"/>
<dbReference type="GeneID" id="45025021"/>
<dbReference type="KEGG" id="ban:BA_5421"/>
<dbReference type="KEGG" id="banh:HYU01_26485"/>
<dbReference type="KEGG" id="bar:GBAA_5421"/>
<dbReference type="KEGG" id="bat:BAS5038"/>
<dbReference type="PATRIC" id="fig|198094.11.peg.5379"/>
<dbReference type="eggNOG" id="COG0653">
    <property type="taxonomic scope" value="Bacteria"/>
</dbReference>
<dbReference type="HOGENOM" id="CLU_005314_3_0_9"/>
<dbReference type="OMA" id="MVHYDVQ"/>
<dbReference type="OrthoDB" id="9805579at2"/>
<dbReference type="Proteomes" id="UP000000427">
    <property type="component" value="Chromosome"/>
</dbReference>
<dbReference type="Proteomes" id="UP000000594">
    <property type="component" value="Chromosome"/>
</dbReference>
<dbReference type="GO" id="GO:0031522">
    <property type="term" value="C:cell envelope Sec protein transport complex"/>
    <property type="evidence" value="ECO:0007669"/>
    <property type="project" value="TreeGrafter"/>
</dbReference>
<dbReference type="GO" id="GO:0005829">
    <property type="term" value="C:cytosol"/>
    <property type="evidence" value="ECO:0007669"/>
    <property type="project" value="TreeGrafter"/>
</dbReference>
<dbReference type="GO" id="GO:0005886">
    <property type="term" value="C:plasma membrane"/>
    <property type="evidence" value="ECO:0007669"/>
    <property type="project" value="UniProtKB-SubCell"/>
</dbReference>
<dbReference type="GO" id="GO:0005524">
    <property type="term" value="F:ATP binding"/>
    <property type="evidence" value="ECO:0007669"/>
    <property type="project" value="UniProtKB-UniRule"/>
</dbReference>
<dbReference type="GO" id="GO:0046872">
    <property type="term" value="F:metal ion binding"/>
    <property type="evidence" value="ECO:0007669"/>
    <property type="project" value="UniProtKB-KW"/>
</dbReference>
<dbReference type="GO" id="GO:0008564">
    <property type="term" value="F:protein-exporting ATPase activity"/>
    <property type="evidence" value="ECO:0007669"/>
    <property type="project" value="UniProtKB-EC"/>
</dbReference>
<dbReference type="GO" id="GO:0065002">
    <property type="term" value="P:intracellular protein transmembrane transport"/>
    <property type="evidence" value="ECO:0007669"/>
    <property type="project" value="UniProtKB-UniRule"/>
</dbReference>
<dbReference type="GO" id="GO:0017038">
    <property type="term" value="P:protein import"/>
    <property type="evidence" value="ECO:0007669"/>
    <property type="project" value="InterPro"/>
</dbReference>
<dbReference type="GO" id="GO:0006605">
    <property type="term" value="P:protein targeting"/>
    <property type="evidence" value="ECO:0007669"/>
    <property type="project" value="UniProtKB-UniRule"/>
</dbReference>
<dbReference type="GO" id="GO:0043952">
    <property type="term" value="P:protein transport by the Sec complex"/>
    <property type="evidence" value="ECO:0007669"/>
    <property type="project" value="TreeGrafter"/>
</dbReference>
<dbReference type="CDD" id="cd17928">
    <property type="entry name" value="DEXDc_SecA"/>
    <property type="match status" value="1"/>
</dbReference>
<dbReference type="CDD" id="cd18803">
    <property type="entry name" value="SF2_C_secA"/>
    <property type="match status" value="1"/>
</dbReference>
<dbReference type="FunFam" id="1.10.3060.10:FF:000002">
    <property type="entry name" value="Preprotein translocase subunit SecA"/>
    <property type="match status" value="1"/>
</dbReference>
<dbReference type="FunFam" id="3.40.50.300:FF:000081">
    <property type="entry name" value="Preprotein translocase subunit SecA"/>
    <property type="match status" value="1"/>
</dbReference>
<dbReference type="FunFam" id="3.40.50.300:FF:000429">
    <property type="entry name" value="Preprotein translocase subunit SecA"/>
    <property type="match status" value="1"/>
</dbReference>
<dbReference type="FunFam" id="3.90.1440.10:FF:000001">
    <property type="entry name" value="Preprotein translocase subunit SecA"/>
    <property type="match status" value="1"/>
</dbReference>
<dbReference type="Gene3D" id="1.10.3060.10">
    <property type="entry name" value="Helical scaffold and wing domains of SecA"/>
    <property type="match status" value="1"/>
</dbReference>
<dbReference type="Gene3D" id="3.40.50.300">
    <property type="entry name" value="P-loop containing nucleotide triphosphate hydrolases"/>
    <property type="match status" value="3"/>
</dbReference>
<dbReference type="Gene3D" id="3.90.1440.10">
    <property type="entry name" value="SecA, preprotein cross-linking domain"/>
    <property type="match status" value="1"/>
</dbReference>
<dbReference type="HAMAP" id="MF_01382">
    <property type="entry name" value="SecA"/>
    <property type="match status" value="1"/>
</dbReference>
<dbReference type="InterPro" id="IPR014001">
    <property type="entry name" value="Helicase_ATP-bd"/>
</dbReference>
<dbReference type="InterPro" id="IPR001650">
    <property type="entry name" value="Helicase_C-like"/>
</dbReference>
<dbReference type="InterPro" id="IPR027417">
    <property type="entry name" value="P-loop_NTPase"/>
</dbReference>
<dbReference type="InterPro" id="IPR004027">
    <property type="entry name" value="SEC_C_motif"/>
</dbReference>
<dbReference type="InterPro" id="IPR000185">
    <property type="entry name" value="SecA"/>
</dbReference>
<dbReference type="InterPro" id="IPR020937">
    <property type="entry name" value="SecA_CS"/>
</dbReference>
<dbReference type="InterPro" id="IPR011115">
    <property type="entry name" value="SecA_DEAD"/>
</dbReference>
<dbReference type="InterPro" id="IPR014018">
    <property type="entry name" value="SecA_motor_DEAD"/>
</dbReference>
<dbReference type="InterPro" id="IPR011130">
    <property type="entry name" value="SecA_preprotein_X-link_dom"/>
</dbReference>
<dbReference type="InterPro" id="IPR044722">
    <property type="entry name" value="SecA_SF2_C"/>
</dbReference>
<dbReference type="InterPro" id="IPR011116">
    <property type="entry name" value="SecA_Wing/Scaffold"/>
</dbReference>
<dbReference type="InterPro" id="IPR036266">
    <property type="entry name" value="SecA_Wing/Scaffold_sf"/>
</dbReference>
<dbReference type="InterPro" id="IPR036670">
    <property type="entry name" value="SecA_X-link_sf"/>
</dbReference>
<dbReference type="NCBIfam" id="NF006630">
    <property type="entry name" value="PRK09200.1"/>
    <property type="match status" value="1"/>
</dbReference>
<dbReference type="NCBIfam" id="NF009538">
    <property type="entry name" value="PRK12904.1"/>
    <property type="match status" value="1"/>
</dbReference>
<dbReference type="NCBIfam" id="TIGR00963">
    <property type="entry name" value="secA"/>
    <property type="match status" value="1"/>
</dbReference>
<dbReference type="PANTHER" id="PTHR30612:SF0">
    <property type="entry name" value="CHLOROPLAST PROTEIN-TRANSPORTING ATPASE"/>
    <property type="match status" value="1"/>
</dbReference>
<dbReference type="PANTHER" id="PTHR30612">
    <property type="entry name" value="SECA INNER MEMBRANE COMPONENT OF SEC PROTEIN SECRETION SYSTEM"/>
    <property type="match status" value="1"/>
</dbReference>
<dbReference type="Pfam" id="PF21090">
    <property type="entry name" value="P-loop_SecA"/>
    <property type="match status" value="2"/>
</dbReference>
<dbReference type="Pfam" id="PF02810">
    <property type="entry name" value="SEC-C"/>
    <property type="match status" value="1"/>
</dbReference>
<dbReference type="Pfam" id="PF07517">
    <property type="entry name" value="SecA_DEAD"/>
    <property type="match status" value="1"/>
</dbReference>
<dbReference type="Pfam" id="PF01043">
    <property type="entry name" value="SecA_PP_bind"/>
    <property type="match status" value="1"/>
</dbReference>
<dbReference type="Pfam" id="PF07516">
    <property type="entry name" value="SecA_SW"/>
    <property type="match status" value="1"/>
</dbReference>
<dbReference type="PRINTS" id="PR00906">
    <property type="entry name" value="SECA"/>
</dbReference>
<dbReference type="SMART" id="SM00957">
    <property type="entry name" value="SecA_DEAD"/>
    <property type="match status" value="1"/>
</dbReference>
<dbReference type="SMART" id="SM00958">
    <property type="entry name" value="SecA_PP_bind"/>
    <property type="match status" value="1"/>
</dbReference>
<dbReference type="SUPFAM" id="SSF81886">
    <property type="entry name" value="Helical scaffold and wing domains of SecA"/>
    <property type="match status" value="1"/>
</dbReference>
<dbReference type="SUPFAM" id="SSF52540">
    <property type="entry name" value="P-loop containing nucleoside triphosphate hydrolases"/>
    <property type="match status" value="2"/>
</dbReference>
<dbReference type="SUPFAM" id="SSF81767">
    <property type="entry name" value="Pre-protein crosslinking domain of SecA"/>
    <property type="match status" value="1"/>
</dbReference>
<dbReference type="PROSITE" id="PS01312">
    <property type="entry name" value="SECA"/>
    <property type="match status" value="1"/>
</dbReference>
<dbReference type="PROSITE" id="PS51196">
    <property type="entry name" value="SECA_MOTOR_DEAD"/>
    <property type="match status" value="1"/>
</dbReference>
<reference key="1">
    <citation type="journal article" date="2003" name="Nature">
        <title>The genome sequence of Bacillus anthracis Ames and comparison to closely related bacteria.</title>
        <authorList>
            <person name="Read T.D."/>
            <person name="Peterson S.N."/>
            <person name="Tourasse N.J."/>
            <person name="Baillie L.W."/>
            <person name="Paulsen I.T."/>
            <person name="Nelson K.E."/>
            <person name="Tettelin H."/>
            <person name="Fouts D.E."/>
            <person name="Eisen J.A."/>
            <person name="Gill S.R."/>
            <person name="Holtzapple E.K."/>
            <person name="Okstad O.A."/>
            <person name="Helgason E."/>
            <person name="Rilstone J."/>
            <person name="Wu M."/>
            <person name="Kolonay J.F."/>
            <person name="Beanan M.J."/>
            <person name="Dodson R.J."/>
            <person name="Brinkac L.M."/>
            <person name="Gwinn M.L."/>
            <person name="DeBoy R.T."/>
            <person name="Madpu R."/>
            <person name="Daugherty S.C."/>
            <person name="Durkin A.S."/>
            <person name="Haft D.H."/>
            <person name="Nelson W.C."/>
            <person name="Peterson J.D."/>
            <person name="Pop M."/>
            <person name="Khouri H.M."/>
            <person name="Radune D."/>
            <person name="Benton J.L."/>
            <person name="Mahamoud Y."/>
            <person name="Jiang L."/>
            <person name="Hance I.R."/>
            <person name="Weidman J.F."/>
            <person name="Berry K.J."/>
            <person name="Plaut R.D."/>
            <person name="Wolf A.M."/>
            <person name="Watkins K.L."/>
            <person name="Nierman W.C."/>
            <person name="Hazen A."/>
            <person name="Cline R.T."/>
            <person name="Redmond C."/>
            <person name="Thwaite J.E."/>
            <person name="White O."/>
            <person name="Salzberg S.L."/>
            <person name="Thomason B."/>
            <person name="Friedlander A.M."/>
            <person name="Koehler T.M."/>
            <person name="Hanna P.C."/>
            <person name="Kolstoe A.-B."/>
            <person name="Fraser C.M."/>
        </authorList>
    </citation>
    <scope>NUCLEOTIDE SEQUENCE [LARGE SCALE GENOMIC DNA]</scope>
    <source>
        <strain>Ames / isolate Porton</strain>
    </source>
</reference>
<reference key="2">
    <citation type="submission" date="2004-01" db="EMBL/GenBank/DDBJ databases">
        <title>Complete genome sequence of Bacillus anthracis Sterne.</title>
        <authorList>
            <person name="Brettin T.S."/>
            <person name="Bruce D."/>
            <person name="Challacombe J.F."/>
            <person name="Gilna P."/>
            <person name="Han C."/>
            <person name="Hill K."/>
            <person name="Hitchcock P."/>
            <person name="Jackson P."/>
            <person name="Keim P."/>
            <person name="Longmire J."/>
            <person name="Lucas S."/>
            <person name="Okinaka R."/>
            <person name="Richardson P."/>
            <person name="Rubin E."/>
            <person name="Tice H."/>
        </authorList>
    </citation>
    <scope>NUCLEOTIDE SEQUENCE [LARGE SCALE GENOMIC DNA]</scope>
    <source>
        <strain>Sterne</strain>
    </source>
</reference>
<reference key="3">
    <citation type="journal article" date="2009" name="J. Bacteriol.">
        <title>The complete genome sequence of Bacillus anthracis Ames 'Ancestor'.</title>
        <authorList>
            <person name="Ravel J."/>
            <person name="Jiang L."/>
            <person name="Stanley S.T."/>
            <person name="Wilson M.R."/>
            <person name="Decker R.S."/>
            <person name="Read T.D."/>
            <person name="Worsham P."/>
            <person name="Keim P.S."/>
            <person name="Salzberg S.L."/>
            <person name="Fraser-Liggett C.M."/>
            <person name="Rasko D.A."/>
        </authorList>
    </citation>
    <scope>NUCLEOTIDE SEQUENCE [LARGE SCALE GENOMIC DNA]</scope>
    <source>
        <strain>Ames ancestor</strain>
    </source>
</reference>
<name>SECA1_BACAN</name>
<evidence type="ECO:0000255" key="1">
    <source>
        <dbReference type="HAMAP-Rule" id="MF_01382"/>
    </source>
</evidence>
<evidence type="ECO:0000256" key="2">
    <source>
        <dbReference type="SAM" id="MobiDB-lite"/>
    </source>
</evidence>
<gene>
    <name evidence="1" type="primary">secA1</name>
    <name type="ordered locus">BA_5421</name>
    <name type="ordered locus">GBAA_5421</name>
    <name type="ordered locus">BAS5038</name>
</gene>
<protein>
    <recommendedName>
        <fullName evidence="1">Protein translocase subunit SecA 1</fullName>
        <ecNumber evidence="1">7.4.2.8</ecNumber>
    </recommendedName>
</protein>
<proteinExistence type="inferred from homology"/>
<feature type="chain" id="PRO_0000318310" description="Protein translocase subunit SecA 1">
    <location>
        <begin position="1"/>
        <end position="835"/>
    </location>
</feature>
<feature type="region of interest" description="Disordered" evidence="2">
    <location>
        <begin position="788"/>
        <end position="807"/>
    </location>
</feature>
<feature type="binding site" evidence="1">
    <location>
        <position position="85"/>
    </location>
    <ligand>
        <name>ATP</name>
        <dbReference type="ChEBI" id="CHEBI:30616"/>
    </ligand>
</feature>
<feature type="binding site" evidence="1">
    <location>
        <begin position="103"/>
        <end position="107"/>
    </location>
    <ligand>
        <name>ATP</name>
        <dbReference type="ChEBI" id="CHEBI:30616"/>
    </ligand>
</feature>
<feature type="binding site" evidence="1">
    <location>
        <position position="492"/>
    </location>
    <ligand>
        <name>ATP</name>
        <dbReference type="ChEBI" id="CHEBI:30616"/>
    </ligand>
</feature>
<feature type="binding site" evidence="1">
    <location>
        <position position="819"/>
    </location>
    <ligand>
        <name>Zn(2+)</name>
        <dbReference type="ChEBI" id="CHEBI:29105"/>
    </ligand>
</feature>
<feature type="binding site" evidence="1">
    <location>
        <position position="821"/>
    </location>
    <ligand>
        <name>Zn(2+)</name>
        <dbReference type="ChEBI" id="CHEBI:29105"/>
    </ligand>
</feature>
<feature type="binding site" evidence="1">
    <location>
        <position position="830"/>
    </location>
    <ligand>
        <name>Zn(2+)</name>
        <dbReference type="ChEBI" id="CHEBI:29105"/>
    </ligand>
</feature>
<feature type="binding site" evidence="1">
    <location>
        <position position="831"/>
    </location>
    <ligand>
        <name>Zn(2+)</name>
        <dbReference type="ChEBI" id="CHEBI:29105"/>
    </ligand>
</feature>
<keyword id="KW-0067">ATP-binding</keyword>
<keyword id="KW-1003">Cell membrane</keyword>
<keyword id="KW-0963">Cytoplasm</keyword>
<keyword id="KW-0472">Membrane</keyword>
<keyword id="KW-0479">Metal-binding</keyword>
<keyword id="KW-0547">Nucleotide-binding</keyword>
<keyword id="KW-0653">Protein transport</keyword>
<keyword id="KW-1185">Reference proteome</keyword>
<keyword id="KW-1278">Translocase</keyword>
<keyword id="KW-0811">Translocation</keyword>
<keyword id="KW-0813">Transport</keyword>
<keyword id="KW-0862">Zinc</keyword>
<sequence>MIGILKKVFDVNQRQIKRMQKTVEQIDALESSIKPLTDEQLKGKTLEFKERLTKGETVDDLLPEAFAVVREAATRVLGMRPYGVQLMGGIALHEGNISEMKTGEGKTLTSTLPVYLNALTGKGVHVVTVNEYLAQRDANEMGQLHEFLGLTVGINLNSMSREEKQEAYAADITYSTNNELGFDYLRDNMVLYKEQCVQRPLHFAIIDEVDSILVDEARTPLIISGQAQKSTELYMFANAFVRTLENEKDYSFDVKTKNVMLTEDGITKAEKAFHIENLFDLKHVALLHHINQALRAHVVMHRDTDYVVQEGEIVIVDQFTGRLMKGRRYSEGLHQAIEAKEGVEIQNESMTLATITFQNYFRMYEKLSGMTGTAKTEEEEFRNIYNMNVIVIPTNKPIIRDDRADLIFKSMKGKFNAVVEDIVNRHKQGQPVLVGTVAIETSELISKMLTRKGVRHNILNAKNHAREADIIAEAGMKGAVTIATNMAGRGTDIKLGDDIKNIGLAVIGTERHESRRIDNQLRGRAGRQGDPGVTQFYLSMEDELMRRFGSDNMKAMMDRLGMDDSQPIESKMVSRAVESAQKRVEGNNYDARKQLLQYDDVLRQQREVIYKQRQEVMESENLRGIIEGMMKSTVERAVALHTQEEIEEDWNIKGLVDYLNTNLLQEGDVKEEELRRLAPEEMSEPIIAKLIERYNDKEKLMPEEQMREFEKVVVFRVVDTKWTEHIDAMDHLREGIHLRAYGQIDPLREYQMEGFAMFESMIASIEEEISRYIMKAEIEQNLERQEVVQGEAVHPSSDGEEAKKKPVVKGDQVGRNDLCKCGSGKKYKNCCGIGK</sequence>
<comment type="function">
    <text evidence="1">Part of the Sec protein translocase complex. Interacts with the SecYEG preprotein conducting channel. Has a central role in coupling the hydrolysis of ATP to the transfer of proteins into and across the cell membrane, serving as an ATP-driven molecular motor driving the stepwise translocation of polypeptide chains across the membrane.</text>
</comment>
<comment type="catalytic activity">
    <reaction evidence="1">
        <text>ATP + H2O + cellular proteinSide 1 = ADP + phosphate + cellular proteinSide 2.</text>
        <dbReference type="EC" id="7.4.2.8"/>
    </reaction>
</comment>
<comment type="cofactor">
    <cofactor evidence="1">
        <name>Zn(2+)</name>
        <dbReference type="ChEBI" id="CHEBI:29105"/>
    </cofactor>
    <text evidence="1">May bind 1 zinc ion per subunit.</text>
</comment>
<comment type="subunit">
    <text evidence="1">Monomer and homodimer. Part of the essential Sec protein translocation apparatus which comprises SecA, SecYEG and auxiliary proteins SecDF. Other proteins may also be involved.</text>
</comment>
<comment type="subcellular location">
    <subcellularLocation>
        <location evidence="1">Cell membrane</location>
        <topology evidence="1">Peripheral membrane protein</topology>
        <orientation evidence="1">Cytoplasmic side</orientation>
    </subcellularLocation>
    <subcellularLocation>
        <location evidence="1">Cytoplasm</location>
    </subcellularLocation>
    <text evidence="1">Distribution is 50-50.</text>
</comment>
<comment type="similarity">
    <text evidence="1">Belongs to the SecA family.</text>
</comment>